<accession>Q9M316</accession>
<protein>
    <recommendedName>
        <fullName>Pentatricopeptide repeat-containing protein At3g61520, mitochondrial</fullName>
    </recommendedName>
</protein>
<feature type="transit peptide" description="Mitochondrion" evidence="1">
    <location>
        <begin position="1"/>
        <end position="30"/>
    </location>
</feature>
<feature type="chain" id="PRO_0000356151" description="Pentatricopeptide repeat-containing protein At3g61520, mitochondrial">
    <location>
        <begin position="31"/>
        <end position="766"/>
    </location>
</feature>
<feature type="repeat" description="PPR 1">
    <location>
        <begin position="151"/>
        <end position="181"/>
    </location>
</feature>
<feature type="repeat" description="PPR 2">
    <location>
        <begin position="184"/>
        <end position="218"/>
    </location>
</feature>
<feature type="repeat" description="PPR 3">
    <location>
        <begin position="221"/>
        <end position="257"/>
    </location>
</feature>
<feature type="repeat" description="PPR 4">
    <location>
        <begin position="258"/>
        <end position="292"/>
    </location>
</feature>
<feature type="repeat" description="PPR 5">
    <location>
        <begin position="293"/>
        <end position="327"/>
    </location>
</feature>
<feature type="repeat" description="PPR 6">
    <location>
        <begin position="328"/>
        <end position="358"/>
    </location>
</feature>
<feature type="repeat" description="PPR 7">
    <location>
        <begin position="369"/>
        <end position="404"/>
    </location>
</feature>
<feature type="repeat" description="PPR 8">
    <location>
        <begin position="405"/>
        <end position="439"/>
    </location>
</feature>
<feature type="repeat" description="PPR 9">
    <location>
        <begin position="440"/>
        <end position="474"/>
    </location>
</feature>
<feature type="repeat" description="PPR 10">
    <location>
        <begin position="475"/>
        <end position="509"/>
    </location>
</feature>
<feature type="repeat" description="PPR 11">
    <location>
        <begin position="510"/>
        <end position="544"/>
    </location>
</feature>
<feature type="repeat" description="PPR 12">
    <location>
        <begin position="545"/>
        <end position="579"/>
    </location>
</feature>
<feature type="repeat" description="PPR 13">
    <location>
        <begin position="580"/>
        <end position="614"/>
    </location>
</feature>
<feature type="repeat" description="PPR 14">
    <location>
        <begin position="615"/>
        <end position="650"/>
    </location>
</feature>
<feature type="repeat" description="PPR 15">
    <location>
        <begin position="651"/>
        <end position="685"/>
    </location>
</feature>
<feature type="repeat" description="PPR 16">
    <location>
        <begin position="686"/>
        <end position="720"/>
    </location>
</feature>
<dbReference type="EMBL" id="AL132962">
    <property type="protein sequence ID" value="CAB71082.1"/>
    <property type="molecule type" value="Genomic_DNA"/>
</dbReference>
<dbReference type="EMBL" id="CP002686">
    <property type="protein sequence ID" value="AEE80217.1"/>
    <property type="molecule type" value="Genomic_DNA"/>
</dbReference>
<dbReference type="PIR" id="T47944">
    <property type="entry name" value="T47944"/>
</dbReference>
<dbReference type="RefSeq" id="NP_191711.1">
    <property type="nucleotide sequence ID" value="NM_116017.3"/>
</dbReference>
<dbReference type="SMR" id="Q9M316"/>
<dbReference type="STRING" id="3702.Q9M316"/>
<dbReference type="PaxDb" id="3702-AT3G61520.1"/>
<dbReference type="ProteomicsDB" id="249199"/>
<dbReference type="EnsemblPlants" id="AT3G61520.1">
    <property type="protein sequence ID" value="AT3G61520.1"/>
    <property type="gene ID" value="AT3G61520"/>
</dbReference>
<dbReference type="GeneID" id="825325"/>
<dbReference type="Gramene" id="AT3G61520.1">
    <property type="protein sequence ID" value="AT3G61520.1"/>
    <property type="gene ID" value="AT3G61520"/>
</dbReference>
<dbReference type="KEGG" id="ath:AT3G61520"/>
<dbReference type="Araport" id="AT3G61520"/>
<dbReference type="TAIR" id="AT3G61520"/>
<dbReference type="eggNOG" id="KOG4197">
    <property type="taxonomic scope" value="Eukaryota"/>
</dbReference>
<dbReference type="HOGENOM" id="CLU_002706_49_10_1"/>
<dbReference type="InParanoid" id="Q9M316"/>
<dbReference type="OMA" id="IHAYCLN"/>
<dbReference type="PhylomeDB" id="Q9M316"/>
<dbReference type="PRO" id="PR:Q9M316"/>
<dbReference type="Proteomes" id="UP000006548">
    <property type="component" value="Chromosome 3"/>
</dbReference>
<dbReference type="ExpressionAtlas" id="Q9M316">
    <property type="expression patterns" value="baseline and differential"/>
</dbReference>
<dbReference type="GO" id="GO:0005739">
    <property type="term" value="C:mitochondrion"/>
    <property type="evidence" value="ECO:0007669"/>
    <property type="project" value="UniProtKB-SubCell"/>
</dbReference>
<dbReference type="Gene3D" id="1.25.40.10">
    <property type="entry name" value="Tetratricopeptide repeat domain"/>
    <property type="match status" value="6"/>
</dbReference>
<dbReference type="InterPro" id="IPR051240">
    <property type="entry name" value="Mito_RNA-Proc/Resp"/>
</dbReference>
<dbReference type="InterPro" id="IPR002885">
    <property type="entry name" value="Pentatricopeptide_rpt"/>
</dbReference>
<dbReference type="InterPro" id="IPR011990">
    <property type="entry name" value="TPR-like_helical_dom_sf"/>
</dbReference>
<dbReference type="NCBIfam" id="TIGR00756">
    <property type="entry name" value="PPR"/>
    <property type="match status" value="11"/>
</dbReference>
<dbReference type="PANTHER" id="PTHR47933">
    <property type="entry name" value="PENTATRICOPEPTIDE REPEAT-CONTAINING PROTEIN 1, MITOCHONDRIAL"/>
    <property type="match status" value="1"/>
</dbReference>
<dbReference type="PANTHER" id="PTHR47933:SF11">
    <property type="entry name" value="PENTATRICOPEPTIDE REPEAT-CONTAINING PROTEIN 2"/>
    <property type="match status" value="1"/>
</dbReference>
<dbReference type="Pfam" id="PF01535">
    <property type="entry name" value="PPR"/>
    <property type="match status" value="2"/>
</dbReference>
<dbReference type="Pfam" id="PF12854">
    <property type="entry name" value="PPR_1"/>
    <property type="match status" value="2"/>
</dbReference>
<dbReference type="Pfam" id="PF13041">
    <property type="entry name" value="PPR_2"/>
    <property type="match status" value="4"/>
</dbReference>
<dbReference type="SUPFAM" id="SSF81901">
    <property type="entry name" value="HCP-like"/>
    <property type="match status" value="1"/>
</dbReference>
<dbReference type="PROSITE" id="PS51375">
    <property type="entry name" value="PPR"/>
    <property type="match status" value="16"/>
</dbReference>
<gene>
    <name type="ordered locus">At3g61520</name>
    <name type="ORF">F2A19.120</name>
</gene>
<sequence length="766" mass="86906">MSIMLSISRRRNSYILLNHSRFLRRFSYDVDPRPEIKLESQEFVVVKFVKTLQKTPQHDWASSESLSALVVSSSSASPLVFSQITRRLGSYSLAISFFEYLDAKSQSLKRREESLSLALQSVIEFAGSEPDPRDKLLRLYEIAKEKNIPLTVVATNLLIRWFGRMGMVNQSVLVYERLDSNMKNSQVRNVVVDVLLRNGLVDDAFKVLDEMLQKESVFPPNRITADIVLHEVWKGRLLTEEKIIALISRFSSHGVSPNSVWLTRFISSLCKNARANAAWDILSDLMKNKTPLEAPPFNALLSCLGRNMDISRMNDLVLKMDEVKIRPDVVTLGILINTLCKSRRVDEALEVFEKMRGKRTDDGNVIKADSIHFNTLIDGLCKVGRLKEAEELLVRMKLEERCAPNAVTYNCLIDGYCRAGKLETAKEVVSRMKEDEIKPNVVTVNTIVGGMCRHHGLNMAVVFFMDMEKEGVKGNVVTYMTLIHACCSVSNVEKAMYWYEKMLEAGCSPDAKIYYALISGLCQVRRDHDAIRVVEKLKEGGFSLDLLAYNMLIGLFCDKNNTEKVYEMLTDMEKEGKKPDSITYNTLISFFGKHKDFESVERMMEQMREDGLDPTVTTYGAVIDAYCSVGELDEALKLFKDMGLHSKVNPNTVIYNILINAFSKLGNFGQALSLKEEMKMKMVRPNVETYNALFKCLNEKTQGETLLKLMDEMVEQSCEPNQITMEILMERLSGSDELVKLRKFMQGYSVASPTEKASPFDVFSLG</sequence>
<reference key="1">
    <citation type="journal article" date="2000" name="Nature">
        <title>Sequence and analysis of chromosome 3 of the plant Arabidopsis thaliana.</title>
        <authorList>
            <person name="Salanoubat M."/>
            <person name="Lemcke K."/>
            <person name="Rieger M."/>
            <person name="Ansorge W."/>
            <person name="Unseld M."/>
            <person name="Fartmann B."/>
            <person name="Valle G."/>
            <person name="Bloecker H."/>
            <person name="Perez-Alonso M."/>
            <person name="Obermaier B."/>
            <person name="Delseny M."/>
            <person name="Boutry M."/>
            <person name="Grivell L.A."/>
            <person name="Mache R."/>
            <person name="Puigdomenech P."/>
            <person name="De Simone V."/>
            <person name="Choisne N."/>
            <person name="Artiguenave F."/>
            <person name="Robert C."/>
            <person name="Brottier P."/>
            <person name="Wincker P."/>
            <person name="Cattolico L."/>
            <person name="Weissenbach J."/>
            <person name="Saurin W."/>
            <person name="Quetier F."/>
            <person name="Schaefer M."/>
            <person name="Mueller-Auer S."/>
            <person name="Gabel C."/>
            <person name="Fuchs M."/>
            <person name="Benes V."/>
            <person name="Wurmbach E."/>
            <person name="Drzonek H."/>
            <person name="Erfle H."/>
            <person name="Jordan N."/>
            <person name="Bangert S."/>
            <person name="Wiedelmann R."/>
            <person name="Kranz H."/>
            <person name="Voss H."/>
            <person name="Holland R."/>
            <person name="Brandt P."/>
            <person name="Nyakatura G."/>
            <person name="Vezzi A."/>
            <person name="D'Angelo M."/>
            <person name="Pallavicini A."/>
            <person name="Toppo S."/>
            <person name="Simionati B."/>
            <person name="Conrad A."/>
            <person name="Hornischer K."/>
            <person name="Kauer G."/>
            <person name="Loehnert T.-H."/>
            <person name="Nordsiek G."/>
            <person name="Reichelt J."/>
            <person name="Scharfe M."/>
            <person name="Schoen O."/>
            <person name="Bargues M."/>
            <person name="Terol J."/>
            <person name="Climent J."/>
            <person name="Navarro P."/>
            <person name="Collado C."/>
            <person name="Perez-Perez A."/>
            <person name="Ottenwaelder B."/>
            <person name="Duchemin D."/>
            <person name="Cooke R."/>
            <person name="Laudie M."/>
            <person name="Berger-Llauro C."/>
            <person name="Purnelle B."/>
            <person name="Masuy D."/>
            <person name="de Haan M."/>
            <person name="Maarse A.C."/>
            <person name="Alcaraz J.-P."/>
            <person name="Cottet A."/>
            <person name="Casacuberta E."/>
            <person name="Monfort A."/>
            <person name="Argiriou A."/>
            <person name="Flores M."/>
            <person name="Liguori R."/>
            <person name="Vitale D."/>
            <person name="Mannhaupt G."/>
            <person name="Haase D."/>
            <person name="Schoof H."/>
            <person name="Rudd S."/>
            <person name="Zaccaria P."/>
            <person name="Mewes H.-W."/>
            <person name="Mayer K.F.X."/>
            <person name="Kaul S."/>
            <person name="Town C.D."/>
            <person name="Koo H.L."/>
            <person name="Tallon L.J."/>
            <person name="Jenkins J."/>
            <person name="Rooney T."/>
            <person name="Rizzo M."/>
            <person name="Walts A."/>
            <person name="Utterback T."/>
            <person name="Fujii C.Y."/>
            <person name="Shea T.P."/>
            <person name="Creasy T.H."/>
            <person name="Haas B."/>
            <person name="Maiti R."/>
            <person name="Wu D."/>
            <person name="Peterson J."/>
            <person name="Van Aken S."/>
            <person name="Pai G."/>
            <person name="Militscher J."/>
            <person name="Sellers P."/>
            <person name="Gill J.E."/>
            <person name="Feldblyum T.V."/>
            <person name="Preuss D."/>
            <person name="Lin X."/>
            <person name="Nierman W.C."/>
            <person name="Salzberg S.L."/>
            <person name="White O."/>
            <person name="Venter J.C."/>
            <person name="Fraser C.M."/>
            <person name="Kaneko T."/>
            <person name="Nakamura Y."/>
            <person name="Sato S."/>
            <person name="Kato T."/>
            <person name="Asamizu E."/>
            <person name="Sasamoto S."/>
            <person name="Kimura T."/>
            <person name="Idesawa K."/>
            <person name="Kawashima K."/>
            <person name="Kishida Y."/>
            <person name="Kiyokawa C."/>
            <person name="Kohara M."/>
            <person name="Matsumoto M."/>
            <person name="Matsuno A."/>
            <person name="Muraki A."/>
            <person name="Nakayama S."/>
            <person name="Nakazaki N."/>
            <person name="Shinpo S."/>
            <person name="Takeuchi C."/>
            <person name="Wada T."/>
            <person name="Watanabe A."/>
            <person name="Yamada M."/>
            <person name="Yasuda M."/>
            <person name="Tabata S."/>
        </authorList>
    </citation>
    <scope>NUCLEOTIDE SEQUENCE [LARGE SCALE GENOMIC DNA]</scope>
    <source>
        <strain>cv. Columbia</strain>
    </source>
</reference>
<reference key="2">
    <citation type="journal article" date="2017" name="Plant J.">
        <title>Araport11: a complete reannotation of the Arabidopsis thaliana reference genome.</title>
        <authorList>
            <person name="Cheng C.Y."/>
            <person name="Krishnakumar V."/>
            <person name="Chan A.P."/>
            <person name="Thibaud-Nissen F."/>
            <person name="Schobel S."/>
            <person name="Town C.D."/>
        </authorList>
    </citation>
    <scope>GENOME REANNOTATION</scope>
    <source>
        <strain>cv. Columbia</strain>
    </source>
</reference>
<reference key="3">
    <citation type="journal article" date="2004" name="Plant Cell">
        <title>Genome-wide analysis of Arabidopsis pentatricopeptide repeat proteins reveals their essential role in organelle biogenesis.</title>
        <authorList>
            <person name="Lurin C."/>
            <person name="Andres C."/>
            <person name="Aubourg S."/>
            <person name="Bellaoui M."/>
            <person name="Bitton F."/>
            <person name="Bruyere C."/>
            <person name="Caboche M."/>
            <person name="Debast C."/>
            <person name="Gualberto J."/>
            <person name="Hoffmann B."/>
            <person name="Lecharny A."/>
            <person name="Le Ret M."/>
            <person name="Martin-Magniette M.-L."/>
            <person name="Mireau H."/>
            <person name="Peeters N."/>
            <person name="Renou J.-P."/>
            <person name="Szurek B."/>
            <person name="Taconnat L."/>
            <person name="Small I."/>
        </authorList>
    </citation>
    <scope>GENE FAMILY</scope>
</reference>
<name>PP292_ARATH</name>
<keyword id="KW-0496">Mitochondrion</keyword>
<keyword id="KW-1185">Reference proteome</keyword>
<keyword id="KW-0677">Repeat</keyword>
<keyword id="KW-0809">Transit peptide</keyword>
<proteinExistence type="evidence at transcript level"/>
<evidence type="ECO:0000255" key="1"/>
<evidence type="ECO:0000305" key="2"/>
<comment type="subcellular location">
    <subcellularLocation>
        <location evidence="2">Mitochondrion</location>
    </subcellularLocation>
</comment>
<comment type="similarity">
    <text evidence="2">Belongs to the PPR family. P subfamily.</text>
</comment>
<comment type="online information" name="Pentatricopeptide repeat proteins">
    <link uri="https://ppr.plantenergy.uwa.edu.au"/>
</comment>
<organism>
    <name type="scientific">Arabidopsis thaliana</name>
    <name type="common">Mouse-ear cress</name>
    <dbReference type="NCBI Taxonomy" id="3702"/>
    <lineage>
        <taxon>Eukaryota</taxon>
        <taxon>Viridiplantae</taxon>
        <taxon>Streptophyta</taxon>
        <taxon>Embryophyta</taxon>
        <taxon>Tracheophyta</taxon>
        <taxon>Spermatophyta</taxon>
        <taxon>Magnoliopsida</taxon>
        <taxon>eudicotyledons</taxon>
        <taxon>Gunneridae</taxon>
        <taxon>Pentapetalae</taxon>
        <taxon>rosids</taxon>
        <taxon>malvids</taxon>
        <taxon>Brassicales</taxon>
        <taxon>Brassicaceae</taxon>
        <taxon>Camelineae</taxon>
        <taxon>Arabidopsis</taxon>
    </lineage>
</organism>